<organism>
    <name type="scientific">Yersinia pestis bv. Antiqua (strain Nepal516)</name>
    <dbReference type="NCBI Taxonomy" id="377628"/>
    <lineage>
        <taxon>Bacteria</taxon>
        <taxon>Pseudomonadati</taxon>
        <taxon>Pseudomonadota</taxon>
        <taxon>Gammaproteobacteria</taxon>
        <taxon>Enterobacterales</taxon>
        <taxon>Yersiniaceae</taxon>
        <taxon>Yersinia</taxon>
    </lineage>
</organism>
<proteinExistence type="inferred from homology"/>
<gene>
    <name evidence="1" type="primary">fadA</name>
    <name type="ordered locus">YPN_0197</name>
    <name type="ORF">YP516_0163</name>
</gene>
<keyword id="KW-0012">Acyltransferase</keyword>
<keyword id="KW-0963">Cytoplasm</keyword>
<keyword id="KW-0276">Fatty acid metabolism</keyword>
<keyword id="KW-0442">Lipid degradation</keyword>
<keyword id="KW-0443">Lipid metabolism</keyword>
<keyword id="KW-0808">Transferase</keyword>
<comment type="function">
    <text evidence="1">Catalyzes the final step of fatty acid oxidation in which acetyl-CoA is released and the CoA ester of a fatty acid two carbons shorter is formed.</text>
</comment>
<comment type="catalytic activity">
    <reaction evidence="1">
        <text>an acyl-CoA + acetyl-CoA = a 3-oxoacyl-CoA + CoA</text>
        <dbReference type="Rhea" id="RHEA:21564"/>
        <dbReference type="ChEBI" id="CHEBI:57287"/>
        <dbReference type="ChEBI" id="CHEBI:57288"/>
        <dbReference type="ChEBI" id="CHEBI:58342"/>
        <dbReference type="ChEBI" id="CHEBI:90726"/>
        <dbReference type="EC" id="2.3.1.16"/>
    </reaction>
</comment>
<comment type="pathway">
    <text evidence="1">Lipid metabolism; fatty acid beta-oxidation.</text>
</comment>
<comment type="subunit">
    <text evidence="1">Heterotetramer of two alpha chains (FadB) and two beta chains (FadA).</text>
</comment>
<comment type="subcellular location">
    <subcellularLocation>
        <location evidence="1">Cytoplasm</location>
    </subcellularLocation>
</comment>
<comment type="similarity">
    <text evidence="1">Belongs to the thiolase-like superfamily. Thiolase family.</text>
</comment>
<name>FADA_YERPN</name>
<reference key="1">
    <citation type="journal article" date="2006" name="J. Bacteriol.">
        <title>Complete genome sequence of Yersinia pestis strains Antiqua and Nepal516: evidence of gene reduction in an emerging pathogen.</title>
        <authorList>
            <person name="Chain P.S.G."/>
            <person name="Hu P."/>
            <person name="Malfatti S.A."/>
            <person name="Radnedge L."/>
            <person name="Larimer F."/>
            <person name="Vergez L.M."/>
            <person name="Worsham P."/>
            <person name="Chu M.C."/>
            <person name="Andersen G.L."/>
        </authorList>
    </citation>
    <scope>NUCLEOTIDE SEQUENCE [LARGE SCALE GENOMIC DNA]</scope>
    <source>
        <strain>Nepal516</strain>
    </source>
</reference>
<reference key="2">
    <citation type="submission" date="2009-04" db="EMBL/GenBank/DDBJ databases">
        <title>Yersinia pestis Nepal516A whole genome shotgun sequencing project.</title>
        <authorList>
            <person name="Plunkett G. III"/>
            <person name="Anderson B.D."/>
            <person name="Baumler D.J."/>
            <person name="Burland V."/>
            <person name="Cabot E.L."/>
            <person name="Glasner J.D."/>
            <person name="Mau B."/>
            <person name="Neeno-Eckwall E."/>
            <person name="Perna N.T."/>
            <person name="Munk A.C."/>
            <person name="Tapia R."/>
            <person name="Green L.D."/>
            <person name="Rogers Y.C."/>
            <person name="Detter J.C."/>
            <person name="Bruce D.C."/>
            <person name="Brettin T.S."/>
        </authorList>
    </citation>
    <scope>NUCLEOTIDE SEQUENCE [LARGE SCALE GENOMIC DNA]</scope>
    <source>
        <strain>Nepal516</strain>
    </source>
</reference>
<feature type="chain" id="PRO_0000292913" description="3-ketoacyl-CoA thiolase">
    <location>
        <begin position="1"/>
        <end position="387"/>
    </location>
</feature>
<feature type="active site" description="Acyl-thioester intermediate" evidence="1">
    <location>
        <position position="91"/>
    </location>
</feature>
<feature type="active site" description="Proton acceptor" evidence="1">
    <location>
        <position position="343"/>
    </location>
</feature>
<feature type="active site" description="Proton acceptor" evidence="1">
    <location>
        <position position="373"/>
    </location>
</feature>
<accession>Q1CNA0</accession>
<accession>D1Q190</accession>
<evidence type="ECO:0000255" key="1">
    <source>
        <dbReference type="HAMAP-Rule" id="MF_01620"/>
    </source>
</evidence>
<sequence>MENVVIIDAVRTPMGRSKGGAFRHVRAEDLSAHLMRAVISRNPGLNAAEIDDIYWGCVQQTLEQGFNIARNASLLAEIPHSVPAVTVNRLCGSSMQALHDGARAIMVGDAKISLIGGVEHMGHVPMNHGVDFHPGMGRTVAKAAGMMGLTAEMLAKIHNISRQSQDEFAFRSHQRAYAATQAGHFAKEIVATNGHDAEGVLKRFDFDEVIRPETNLSGLAALRPAFDPVNGTVTAGTSSALSDGASAMLIMSESRAKSLGLTPRARIRSMAVVGCDPSIMGYGPVPASQLALKRAGLELADIGLFELNEAFAAQSLACLKGLGLLESMDDKVNLNGGAIALGHPLGCSGARISTTLLNLMERRDVQFGLATMCIGLGQGIATVFERL</sequence>
<protein>
    <recommendedName>
        <fullName evidence="1">3-ketoacyl-CoA thiolase</fullName>
        <ecNumber evidence="1">2.3.1.16</ecNumber>
    </recommendedName>
    <alternativeName>
        <fullName evidence="1">Acetyl-CoA acyltransferase</fullName>
    </alternativeName>
    <alternativeName>
        <fullName evidence="1">Beta-ketothiolase</fullName>
    </alternativeName>
    <alternativeName>
        <fullName evidence="1">Fatty acid oxidation complex subunit beta</fullName>
    </alternativeName>
</protein>
<dbReference type="EC" id="2.3.1.16" evidence="1"/>
<dbReference type="EMBL" id="CP000305">
    <property type="protein sequence ID" value="ABG16530.1"/>
    <property type="molecule type" value="Genomic_DNA"/>
</dbReference>
<dbReference type="EMBL" id="ACNQ01000001">
    <property type="protein sequence ID" value="EEO78644.1"/>
    <property type="molecule type" value="Genomic_DNA"/>
</dbReference>
<dbReference type="RefSeq" id="WP_002211545.1">
    <property type="nucleotide sequence ID" value="NZ_ACNQ01000001.1"/>
</dbReference>
<dbReference type="SMR" id="Q1CNA0"/>
<dbReference type="GeneID" id="57974941"/>
<dbReference type="KEGG" id="ypn:YPN_0197"/>
<dbReference type="HOGENOM" id="CLU_031026_2_2_6"/>
<dbReference type="UniPathway" id="UPA00659"/>
<dbReference type="Proteomes" id="UP000008936">
    <property type="component" value="Chromosome"/>
</dbReference>
<dbReference type="GO" id="GO:0005737">
    <property type="term" value="C:cytoplasm"/>
    <property type="evidence" value="ECO:0007669"/>
    <property type="project" value="UniProtKB-SubCell"/>
</dbReference>
<dbReference type="GO" id="GO:0003988">
    <property type="term" value="F:acetyl-CoA C-acyltransferase activity"/>
    <property type="evidence" value="ECO:0007669"/>
    <property type="project" value="UniProtKB-UniRule"/>
</dbReference>
<dbReference type="GO" id="GO:0006635">
    <property type="term" value="P:fatty acid beta-oxidation"/>
    <property type="evidence" value="ECO:0007669"/>
    <property type="project" value="UniProtKB-UniRule"/>
</dbReference>
<dbReference type="GO" id="GO:0010124">
    <property type="term" value="P:phenylacetate catabolic process"/>
    <property type="evidence" value="ECO:0007669"/>
    <property type="project" value="TreeGrafter"/>
</dbReference>
<dbReference type="CDD" id="cd00751">
    <property type="entry name" value="thiolase"/>
    <property type="match status" value="1"/>
</dbReference>
<dbReference type="FunFam" id="3.40.47.10:FF:000010">
    <property type="entry name" value="Acetyl-CoA acetyltransferase (Thiolase)"/>
    <property type="match status" value="1"/>
</dbReference>
<dbReference type="Gene3D" id="3.40.47.10">
    <property type="match status" value="2"/>
</dbReference>
<dbReference type="HAMAP" id="MF_01620">
    <property type="entry name" value="FadA"/>
    <property type="match status" value="1"/>
</dbReference>
<dbReference type="InterPro" id="IPR012805">
    <property type="entry name" value="FadA"/>
</dbReference>
<dbReference type="InterPro" id="IPR002155">
    <property type="entry name" value="Thiolase"/>
</dbReference>
<dbReference type="InterPro" id="IPR016039">
    <property type="entry name" value="Thiolase-like"/>
</dbReference>
<dbReference type="InterPro" id="IPR050215">
    <property type="entry name" value="Thiolase-like_sf_Thiolase"/>
</dbReference>
<dbReference type="InterPro" id="IPR020615">
    <property type="entry name" value="Thiolase_acyl_enz_int_AS"/>
</dbReference>
<dbReference type="InterPro" id="IPR020610">
    <property type="entry name" value="Thiolase_AS"/>
</dbReference>
<dbReference type="InterPro" id="IPR020617">
    <property type="entry name" value="Thiolase_C"/>
</dbReference>
<dbReference type="InterPro" id="IPR020613">
    <property type="entry name" value="Thiolase_CS"/>
</dbReference>
<dbReference type="InterPro" id="IPR020616">
    <property type="entry name" value="Thiolase_N"/>
</dbReference>
<dbReference type="NCBIfam" id="TIGR01930">
    <property type="entry name" value="AcCoA-C-Actrans"/>
    <property type="match status" value="1"/>
</dbReference>
<dbReference type="NCBIfam" id="TIGR02445">
    <property type="entry name" value="fadA"/>
    <property type="match status" value="1"/>
</dbReference>
<dbReference type="NCBIfam" id="NF006510">
    <property type="entry name" value="PRK08947.1"/>
    <property type="match status" value="1"/>
</dbReference>
<dbReference type="PANTHER" id="PTHR43853:SF11">
    <property type="entry name" value="3-KETOACYL-COA THIOLASE FADA"/>
    <property type="match status" value="1"/>
</dbReference>
<dbReference type="PANTHER" id="PTHR43853">
    <property type="entry name" value="3-KETOACYL-COA THIOLASE, PEROXISOMAL"/>
    <property type="match status" value="1"/>
</dbReference>
<dbReference type="Pfam" id="PF02803">
    <property type="entry name" value="Thiolase_C"/>
    <property type="match status" value="1"/>
</dbReference>
<dbReference type="Pfam" id="PF00108">
    <property type="entry name" value="Thiolase_N"/>
    <property type="match status" value="1"/>
</dbReference>
<dbReference type="PIRSF" id="PIRSF000429">
    <property type="entry name" value="Ac-CoA_Ac_transf"/>
    <property type="match status" value="1"/>
</dbReference>
<dbReference type="SUPFAM" id="SSF53901">
    <property type="entry name" value="Thiolase-like"/>
    <property type="match status" value="2"/>
</dbReference>
<dbReference type="PROSITE" id="PS00098">
    <property type="entry name" value="THIOLASE_1"/>
    <property type="match status" value="1"/>
</dbReference>
<dbReference type="PROSITE" id="PS00737">
    <property type="entry name" value="THIOLASE_2"/>
    <property type="match status" value="1"/>
</dbReference>
<dbReference type="PROSITE" id="PS00099">
    <property type="entry name" value="THIOLASE_3"/>
    <property type="match status" value="1"/>
</dbReference>